<reference key="1">
    <citation type="submission" date="2006-03" db="EMBL/GenBank/DDBJ databases">
        <title>Complete sequence of Shewanella denitrificans OS217.</title>
        <authorList>
            <consortium name="US DOE Joint Genome Institute"/>
            <person name="Copeland A."/>
            <person name="Lucas S."/>
            <person name="Lapidus A."/>
            <person name="Barry K."/>
            <person name="Detter J.C."/>
            <person name="Glavina del Rio T."/>
            <person name="Hammon N."/>
            <person name="Israni S."/>
            <person name="Dalin E."/>
            <person name="Tice H."/>
            <person name="Pitluck S."/>
            <person name="Brettin T."/>
            <person name="Bruce D."/>
            <person name="Han C."/>
            <person name="Tapia R."/>
            <person name="Gilna P."/>
            <person name="Kiss H."/>
            <person name="Schmutz J."/>
            <person name="Larimer F."/>
            <person name="Land M."/>
            <person name="Hauser L."/>
            <person name="Kyrpides N."/>
            <person name="Lykidis A."/>
            <person name="Richardson P."/>
        </authorList>
    </citation>
    <scope>NUCLEOTIDE SEQUENCE [LARGE SCALE GENOMIC DNA]</scope>
    <source>
        <strain>OS217 / ATCC BAA-1090 / DSM 15013</strain>
    </source>
</reference>
<comment type="catalytic activity">
    <reaction evidence="1">
        <text>(S)-2,3,4,5-tetrahydrodipicolinate + succinyl-CoA + H2O = (S)-2-succinylamino-6-oxoheptanedioate + CoA</text>
        <dbReference type="Rhea" id="RHEA:17325"/>
        <dbReference type="ChEBI" id="CHEBI:15377"/>
        <dbReference type="ChEBI" id="CHEBI:15685"/>
        <dbReference type="ChEBI" id="CHEBI:16845"/>
        <dbReference type="ChEBI" id="CHEBI:57287"/>
        <dbReference type="ChEBI" id="CHEBI:57292"/>
        <dbReference type="EC" id="2.3.1.117"/>
    </reaction>
</comment>
<comment type="pathway">
    <text evidence="1">Amino-acid biosynthesis; L-lysine biosynthesis via DAP pathway; LL-2,6-diaminopimelate from (S)-tetrahydrodipicolinate (succinylase route): step 1/3.</text>
</comment>
<comment type="subunit">
    <text evidence="1">Homotrimer.</text>
</comment>
<comment type="subcellular location">
    <subcellularLocation>
        <location evidence="1">Cytoplasm</location>
    </subcellularLocation>
</comment>
<comment type="similarity">
    <text evidence="1">Belongs to the transferase hexapeptide repeat family.</text>
</comment>
<dbReference type="EC" id="2.3.1.117" evidence="1"/>
<dbReference type="EMBL" id="CP000302">
    <property type="protein sequence ID" value="ABE54836.1"/>
    <property type="molecule type" value="Genomic_DNA"/>
</dbReference>
<dbReference type="RefSeq" id="WP_011495994.1">
    <property type="nucleotide sequence ID" value="NC_007954.1"/>
</dbReference>
<dbReference type="SMR" id="Q12NZ0"/>
<dbReference type="STRING" id="318161.Sden_1551"/>
<dbReference type="KEGG" id="sdn:Sden_1551"/>
<dbReference type="eggNOG" id="COG2171">
    <property type="taxonomic scope" value="Bacteria"/>
</dbReference>
<dbReference type="HOGENOM" id="CLU_050859_0_1_6"/>
<dbReference type="OrthoDB" id="9775362at2"/>
<dbReference type="UniPathway" id="UPA00034">
    <property type="reaction ID" value="UER00019"/>
</dbReference>
<dbReference type="Proteomes" id="UP000001982">
    <property type="component" value="Chromosome"/>
</dbReference>
<dbReference type="GO" id="GO:0005737">
    <property type="term" value="C:cytoplasm"/>
    <property type="evidence" value="ECO:0007669"/>
    <property type="project" value="UniProtKB-SubCell"/>
</dbReference>
<dbReference type="GO" id="GO:0008666">
    <property type="term" value="F:2,3,4,5-tetrahydropyridine-2,6-dicarboxylate N-succinyltransferase activity"/>
    <property type="evidence" value="ECO:0007669"/>
    <property type="project" value="UniProtKB-UniRule"/>
</dbReference>
<dbReference type="GO" id="GO:0016779">
    <property type="term" value="F:nucleotidyltransferase activity"/>
    <property type="evidence" value="ECO:0007669"/>
    <property type="project" value="TreeGrafter"/>
</dbReference>
<dbReference type="GO" id="GO:0019877">
    <property type="term" value="P:diaminopimelate biosynthetic process"/>
    <property type="evidence" value="ECO:0007669"/>
    <property type="project" value="UniProtKB-UniRule"/>
</dbReference>
<dbReference type="GO" id="GO:0009089">
    <property type="term" value="P:lysine biosynthetic process via diaminopimelate"/>
    <property type="evidence" value="ECO:0007669"/>
    <property type="project" value="UniProtKB-UniRule"/>
</dbReference>
<dbReference type="CDD" id="cd03350">
    <property type="entry name" value="LbH_THP_succinylT"/>
    <property type="match status" value="1"/>
</dbReference>
<dbReference type="Gene3D" id="2.160.10.10">
    <property type="entry name" value="Hexapeptide repeat proteins"/>
    <property type="match status" value="1"/>
</dbReference>
<dbReference type="Gene3D" id="1.10.166.10">
    <property type="entry name" value="Tetrahydrodipicolinate-N-succinyltransferase, N-terminal domain"/>
    <property type="match status" value="1"/>
</dbReference>
<dbReference type="HAMAP" id="MF_00811">
    <property type="entry name" value="DapD"/>
    <property type="match status" value="1"/>
</dbReference>
<dbReference type="InterPro" id="IPR005664">
    <property type="entry name" value="DapD_Trfase_Hexpep_rpt_fam"/>
</dbReference>
<dbReference type="InterPro" id="IPR001451">
    <property type="entry name" value="Hexapep"/>
</dbReference>
<dbReference type="InterPro" id="IPR018357">
    <property type="entry name" value="Hexapep_transf_CS"/>
</dbReference>
<dbReference type="InterPro" id="IPR023180">
    <property type="entry name" value="THP_succinylTrfase_dom1"/>
</dbReference>
<dbReference type="InterPro" id="IPR037133">
    <property type="entry name" value="THP_succinylTrfase_N_sf"/>
</dbReference>
<dbReference type="InterPro" id="IPR011004">
    <property type="entry name" value="Trimer_LpxA-like_sf"/>
</dbReference>
<dbReference type="NCBIfam" id="TIGR00965">
    <property type="entry name" value="dapD"/>
    <property type="match status" value="1"/>
</dbReference>
<dbReference type="NCBIfam" id="NF008808">
    <property type="entry name" value="PRK11830.1"/>
    <property type="match status" value="1"/>
</dbReference>
<dbReference type="PANTHER" id="PTHR19136:SF52">
    <property type="entry name" value="2,3,4,5-TETRAHYDROPYRIDINE-2,6-DICARBOXYLATE N-SUCCINYLTRANSFERASE"/>
    <property type="match status" value="1"/>
</dbReference>
<dbReference type="PANTHER" id="PTHR19136">
    <property type="entry name" value="MOLYBDENUM COFACTOR GUANYLYLTRANSFERASE"/>
    <property type="match status" value="1"/>
</dbReference>
<dbReference type="Pfam" id="PF14602">
    <property type="entry name" value="Hexapep_2"/>
    <property type="match status" value="1"/>
</dbReference>
<dbReference type="Pfam" id="PF14805">
    <property type="entry name" value="THDPS_N_2"/>
    <property type="match status" value="1"/>
</dbReference>
<dbReference type="SUPFAM" id="SSF51161">
    <property type="entry name" value="Trimeric LpxA-like enzymes"/>
    <property type="match status" value="1"/>
</dbReference>
<dbReference type="PROSITE" id="PS00101">
    <property type="entry name" value="HEXAPEP_TRANSFERASES"/>
    <property type="match status" value="1"/>
</dbReference>
<gene>
    <name evidence="1" type="primary">dapD</name>
    <name type="ordered locus">Sden_1551</name>
</gene>
<proteinExistence type="inferred from homology"/>
<organism>
    <name type="scientific">Shewanella denitrificans (strain OS217 / ATCC BAA-1090 / DSM 15013)</name>
    <dbReference type="NCBI Taxonomy" id="318161"/>
    <lineage>
        <taxon>Bacteria</taxon>
        <taxon>Pseudomonadati</taxon>
        <taxon>Pseudomonadota</taxon>
        <taxon>Gammaproteobacteria</taxon>
        <taxon>Alteromonadales</taxon>
        <taxon>Shewanellaceae</taxon>
        <taxon>Shewanella</taxon>
    </lineage>
</organism>
<accession>Q12NZ0</accession>
<keyword id="KW-0012">Acyltransferase</keyword>
<keyword id="KW-0028">Amino-acid biosynthesis</keyword>
<keyword id="KW-0963">Cytoplasm</keyword>
<keyword id="KW-0220">Diaminopimelate biosynthesis</keyword>
<keyword id="KW-0457">Lysine biosynthesis</keyword>
<keyword id="KW-1185">Reference proteome</keyword>
<keyword id="KW-0677">Repeat</keyword>
<keyword id="KW-0808">Transferase</keyword>
<feature type="chain" id="PRO_1000047183" description="2,3,4,5-tetrahydropyridine-2,6-dicarboxylate N-succinyltransferase">
    <location>
        <begin position="1"/>
        <end position="274"/>
    </location>
</feature>
<feature type="binding site" evidence="1">
    <location>
        <position position="104"/>
    </location>
    <ligand>
        <name>substrate</name>
    </ligand>
</feature>
<feature type="binding site" evidence="1">
    <location>
        <position position="141"/>
    </location>
    <ligand>
        <name>substrate</name>
    </ligand>
</feature>
<name>DAPD_SHEDO</name>
<protein>
    <recommendedName>
        <fullName evidence="1">2,3,4,5-tetrahydropyridine-2,6-dicarboxylate N-succinyltransferase</fullName>
        <ecNumber evidence="1">2.3.1.117</ecNumber>
    </recommendedName>
    <alternativeName>
        <fullName evidence="1">Tetrahydrodipicolinate N-succinyltransferase</fullName>
        <shortName evidence="1">THDP succinyltransferase</shortName>
        <shortName evidence="1">THP succinyltransferase</shortName>
        <shortName evidence="1">Tetrahydropicolinate succinylase</shortName>
    </alternativeName>
</protein>
<evidence type="ECO:0000255" key="1">
    <source>
        <dbReference type="HAMAP-Rule" id="MF_00811"/>
    </source>
</evidence>
<sequence>MEALRQRIETAFENRQHITPGTVEPSLRADVETVIAMLDKGEARVAEKINGQWQVHQWLKKAVLLSFRIFDNGVIDGGDTKYFDKVPQKFADYDEARFKAEAIRVVPPATVRKGSFIGKNTVLMPSYVNLGAYVDEGTMVDTWATVGSCAQIGKNVHLSGGVGIGGVLEPLQAGPTIIEDNCFIGARSEIVEGVVVEEGSVISMGVYIGQSTRIFDRETGEVHYGRVPAGSVVVSGNLPSACGKYSLYAAIIVKKVDAKTRAKVGINELLRIVD</sequence>